<protein>
    <recommendedName>
        <fullName evidence="1">Small ribosomal subunit protein uS17</fullName>
    </recommendedName>
    <alternativeName>
        <fullName evidence="2">30S ribosomal protein S17</fullName>
    </alternativeName>
</protein>
<sequence length="86" mass="10147">MAEERNFRKVRRGYVVSDKMDKTISVELEQRSTHPLYGKVVRSTRTVKVHDEHNEAHIGDLVSIMETRPLSKTKRWRLDSIIERAK</sequence>
<evidence type="ECO:0000255" key="1">
    <source>
        <dbReference type="HAMAP-Rule" id="MF_01345"/>
    </source>
</evidence>
<evidence type="ECO:0000305" key="2"/>
<comment type="function">
    <text evidence="1">One of the primary rRNA binding proteins, it binds specifically to the 5'-end of 16S ribosomal RNA.</text>
</comment>
<comment type="subunit">
    <text evidence="1">Part of the 30S ribosomal subunit.</text>
</comment>
<comment type="similarity">
    <text evidence="1">Belongs to the universal ribosomal protein uS17 family.</text>
</comment>
<accession>A1A078</accession>
<proteinExistence type="inferred from homology"/>
<feature type="chain" id="PRO_1000054917" description="Small ribosomal subunit protein uS17">
    <location>
        <begin position="1"/>
        <end position="86"/>
    </location>
</feature>
<keyword id="KW-1185">Reference proteome</keyword>
<keyword id="KW-0687">Ribonucleoprotein</keyword>
<keyword id="KW-0689">Ribosomal protein</keyword>
<keyword id="KW-0694">RNA-binding</keyword>
<keyword id="KW-0699">rRNA-binding</keyword>
<organism>
    <name type="scientific">Bifidobacterium adolescentis (strain ATCC 15703 / DSM 20083 / NCTC 11814 / E194a)</name>
    <dbReference type="NCBI Taxonomy" id="367928"/>
    <lineage>
        <taxon>Bacteria</taxon>
        <taxon>Bacillati</taxon>
        <taxon>Actinomycetota</taxon>
        <taxon>Actinomycetes</taxon>
        <taxon>Bifidobacteriales</taxon>
        <taxon>Bifidobacteriaceae</taxon>
        <taxon>Bifidobacterium</taxon>
    </lineage>
</organism>
<dbReference type="EMBL" id="AP009256">
    <property type="protein sequence ID" value="BAF39111.1"/>
    <property type="molecule type" value="Genomic_DNA"/>
</dbReference>
<dbReference type="RefSeq" id="WP_003808036.1">
    <property type="nucleotide sequence ID" value="NC_008618.1"/>
</dbReference>
<dbReference type="SMR" id="A1A078"/>
<dbReference type="STRING" id="367928.BAD_0330"/>
<dbReference type="PaxDb" id="1680-BADO_0337"/>
<dbReference type="GeneID" id="45582229"/>
<dbReference type="GeneID" id="45598863"/>
<dbReference type="KEGG" id="bad:BAD_0330"/>
<dbReference type="HOGENOM" id="CLU_073626_1_0_11"/>
<dbReference type="Proteomes" id="UP000008702">
    <property type="component" value="Chromosome"/>
</dbReference>
<dbReference type="GO" id="GO:0022627">
    <property type="term" value="C:cytosolic small ribosomal subunit"/>
    <property type="evidence" value="ECO:0007669"/>
    <property type="project" value="TreeGrafter"/>
</dbReference>
<dbReference type="GO" id="GO:0019843">
    <property type="term" value="F:rRNA binding"/>
    <property type="evidence" value="ECO:0007669"/>
    <property type="project" value="UniProtKB-UniRule"/>
</dbReference>
<dbReference type="GO" id="GO:0003735">
    <property type="term" value="F:structural constituent of ribosome"/>
    <property type="evidence" value="ECO:0007669"/>
    <property type="project" value="InterPro"/>
</dbReference>
<dbReference type="GO" id="GO:0006412">
    <property type="term" value="P:translation"/>
    <property type="evidence" value="ECO:0007669"/>
    <property type="project" value="UniProtKB-UniRule"/>
</dbReference>
<dbReference type="CDD" id="cd00364">
    <property type="entry name" value="Ribosomal_uS17"/>
    <property type="match status" value="1"/>
</dbReference>
<dbReference type="Gene3D" id="2.40.50.140">
    <property type="entry name" value="Nucleic acid-binding proteins"/>
    <property type="match status" value="1"/>
</dbReference>
<dbReference type="HAMAP" id="MF_01345_B">
    <property type="entry name" value="Ribosomal_uS17_B"/>
    <property type="match status" value="1"/>
</dbReference>
<dbReference type="InterPro" id="IPR012340">
    <property type="entry name" value="NA-bd_OB-fold"/>
</dbReference>
<dbReference type="InterPro" id="IPR000266">
    <property type="entry name" value="Ribosomal_uS17"/>
</dbReference>
<dbReference type="InterPro" id="IPR019984">
    <property type="entry name" value="Ribosomal_uS17_bact/chlr"/>
</dbReference>
<dbReference type="InterPro" id="IPR019979">
    <property type="entry name" value="Ribosomal_uS17_CS"/>
</dbReference>
<dbReference type="NCBIfam" id="NF004123">
    <property type="entry name" value="PRK05610.1"/>
    <property type="match status" value="1"/>
</dbReference>
<dbReference type="NCBIfam" id="TIGR03635">
    <property type="entry name" value="uS17_bact"/>
    <property type="match status" value="1"/>
</dbReference>
<dbReference type="PANTHER" id="PTHR10744">
    <property type="entry name" value="40S RIBOSOMAL PROTEIN S11 FAMILY MEMBER"/>
    <property type="match status" value="1"/>
</dbReference>
<dbReference type="PANTHER" id="PTHR10744:SF1">
    <property type="entry name" value="SMALL RIBOSOMAL SUBUNIT PROTEIN US17M"/>
    <property type="match status" value="1"/>
</dbReference>
<dbReference type="Pfam" id="PF00366">
    <property type="entry name" value="Ribosomal_S17"/>
    <property type="match status" value="1"/>
</dbReference>
<dbReference type="PRINTS" id="PR00973">
    <property type="entry name" value="RIBOSOMALS17"/>
</dbReference>
<dbReference type="SUPFAM" id="SSF50249">
    <property type="entry name" value="Nucleic acid-binding proteins"/>
    <property type="match status" value="1"/>
</dbReference>
<dbReference type="PROSITE" id="PS00056">
    <property type="entry name" value="RIBOSOMAL_S17"/>
    <property type="match status" value="1"/>
</dbReference>
<gene>
    <name evidence="1" type="primary">rpsQ</name>
    <name type="ordered locus">BAD_0330</name>
</gene>
<name>RS17_BIFAA</name>
<reference key="1">
    <citation type="submission" date="2006-12" db="EMBL/GenBank/DDBJ databases">
        <title>Bifidobacterium adolescentis complete genome sequence.</title>
        <authorList>
            <person name="Suzuki T."/>
            <person name="Tsuda Y."/>
            <person name="Kanou N."/>
            <person name="Inoue T."/>
            <person name="Kumazaki K."/>
            <person name="Nagano S."/>
            <person name="Hirai S."/>
            <person name="Tanaka K."/>
            <person name="Watanabe K."/>
        </authorList>
    </citation>
    <scope>NUCLEOTIDE SEQUENCE [LARGE SCALE GENOMIC DNA]</scope>
    <source>
        <strain>ATCC 15703 / DSM 20083 / NCTC 11814 / E194a</strain>
    </source>
</reference>